<name>NEUM_MACFA</name>
<comment type="function">
    <text evidence="4">This protein is associated with nerve growth. It is a major component of the motile 'growth cones' that form the tips of elongating axons. Plays a role in axonal and dendritic filopodia induction (By similarity).</text>
</comment>
<comment type="subunit">
    <text evidence="1 2">Identified in a complex containing FGFR4, NCAM1, CDH2, PLCG1, FRS2, SRC, SHC1, GAP43 and CTTN (By similarity). Interacts (via IQ domain) with calmodulin (By similarity). Binds calmodulin with a greater affinity in the absence of Ca(2+) than in its presence (By similarity).</text>
</comment>
<comment type="subcellular location">
    <subcellularLocation>
        <location evidence="4">Cell membrane</location>
        <topology evidence="4">Peripheral membrane protein</topology>
        <orientation evidence="4">Cytoplasmic side</orientation>
    </subcellularLocation>
    <subcellularLocation>
        <location evidence="4">Cell projection</location>
        <location evidence="4">Growth cone membrane</location>
        <topology evidence="4">Peripheral membrane protein</topology>
        <orientation evidence="4">Cytoplasmic side</orientation>
    </subcellularLocation>
    <subcellularLocation>
        <location evidence="4">Synapse</location>
    </subcellularLocation>
    <subcellularLocation>
        <location evidence="4">Cell projection</location>
        <location evidence="4">Filopodium membrane</location>
        <topology evidence="4">Peripheral membrane protein</topology>
    </subcellularLocation>
    <subcellularLocation>
        <location evidence="3">Perikaryon</location>
    </subcellularLocation>
    <subcellularLocation>
        <location evidence="3">Cell projection</location>
        <location evidence="3">Dendrite</location>
    </subcellularLocation>
    <subcellularLocation>
        <location evidence="3">Cell projection</location>
        <location evidence="3">Axon</location>
    </subcellularLocation>
    <subcellularLocation>
        <location evidence="3">Cytoplasm</location>
    </subcellularLocation>
    <text evidence="4">Cytoplasmic surface of growth cone and synaptic plasma membranes.</text>
</comment>
<comment type="PTM">
    <text evidence="3">Phosphorylated (By similarity). Phosphorylation of this protein by a protein kinase C is specifically correlated with certain forms of synaptic plasticity (By similarity).</text>
</comment>
<comment type="PTM">
    <text evidence="2 4">Palmitoylated by ZDHHC3 (By similarity). Palmitoylation is regulated by ARF6 and is essential for plasma membrane association and axonal and dendritic filopodia induction. Deacylated by LYPLA2 (By similarity).</text>
</comment>
<comment type="similarity">
    <text evidence="7">Belongs to the neuromodulin family.</text>
</comment>
<feature type="chain" id="PRO_0000250206" description="Neuromodulin">
    <location>
        <begin position="1"/>
        <end position="238"/>
    </location>
</feature>
<feature type="domain" description="IQ" evidence="5">
    <location>
        <begin position="31"/>
        <end position="60"/>
    </location>
</feature>
<feature type="region of interest" description="Disordered" evidence="6">
    <location>
        <begin position="1"/>
        <end position="238"/>
    </location>
</feature>
<feature type="compositionally biased region" description="Basic and acidic residues" evidence="6">
    <location>
        <begin position="9"/>
        <end position="32"/>
    </location>
</feature>
<feature type="compositionally biased region" description="Basic and acidic residues" evidence="6">
    <location>
        <begin position="54"/>
        <end position="83"/>
    </location>
</feature>
<feature type="compositionally biased region" description="Low complexity" evidence="6">
    <location>
        <begin position="84"/>
        <end position="95"/>
    </location>
</feature>
<feature type="compositionally biased region" description="Basic and acidic residues" evidence="6">
    <location>
        <begin position="97"/>
        <end position="116"/>
    </location>
</feature>
<feature type="compositionally biased region" description="Low complexity" evidence="6">
    <location>
        <begin position="119"/>
        <end position="130"/>
    </location>
</feature>
<feature type="compositionally biased region" description="Polar residues" evidence="6">
    <location>
        <begin position="139"/>
        <end position="154"/>
    </location>
</feature>
<feature type="compositionally biased region" description="Basic and acidic residues" evidence="6">
    <location>
        <begin position="155"/>
        <end position="167"/>
    </location>
</feature>
<feature type="compositionally biased region" description="Low complexity" evidence="6">
    <location>
        <begin position="168"/>
        <end position="199"/>
    </location>
</feature>
<feature type="compositionally biased region" description="Basic and acidic residues" evidence="6">
    <location>
        <begin position="213"/>
        <end position="225"/>
    </location>
</feature>
<feature type="compositionally biased region" description="Acidic residues" evidence="6">
    <location>
        <begin position="226"/>
        <end position="238"/>
    </location>
</feature>
<feature type="modified residue" description="Phosphoserine; by PHK and PKC" evidence="1">
    <location>
        <position position="41"/>
    </location>
</feature>
<feature type="modified residue" description="Phosphoserine" evidence="2">
    <location>
        <position position="151"/>
    </location>
</feature>
<feature type="modified residue" description="Phosphoserine" evidence="2">
    <location>
        <position position="153"/>
    </location>
</feature>
<feature type="modified residue" description="Phosphoserine" evidence="2">
    <location>
        <position position="154"/>
    </location>
</feature>
<feature type="modified residue" description="Phosphothreonine" evidence="2">
    <location>
        <position position="181"/>
    </location>
</feature>
<feature type="modified residue" description="Phosphoserine; by CK2" evidence="1">
    <location>
        <position position="202"/>
    </location>
</feature>
<feature type="modified residue" description="Phosphoserine; by CK2" evidence="1">
    <location>
        <position position="203"/>
    </location>
</feature>
<feature type="lipid moiety-binding region" description="S-palmitoyl cysteine" evidence="2">
    <location>
        <position position="3"/>
    </location>
</feature>
<feature type="lipid moiety-binding region" description="S-palmitoyl cysteine" evidence="2">
    <location>
        <position position="4"/>
    </location>
</feature>
<gene>
    <name type="primary">GAP43</name>
    <name type="ORF">QtrA-11580</name>
    <name type="ORF">QtrA-13071</name>
</gene>
<keyword id="KW-0112">Calmodulin-binding</keyword>
<keyword id="KW-1003">Cell membrane</keyword>
<keyword id="KW-0966">Cell projection</keyword>
<keyword id="KW-0963">Cytoplasm</keyword>
<keyword id="KW-0217">Developmental protein</keyword>
<keyword id="KW-0221">Differentiation</keyword>
<keyword id="KW-0341">Growth regulation</keyword>
<keyword id="KW-0449">Lipoprotein</keyword>
<keyword id="KW-0472">Membrane</keyword>
<keyword id="KW-0524">Neurogenesis</keyword>
<keyword id="KW-0564">Palmitate</keyword>
<keyword id="KW-0597">Phosphoprotein</keyword>
<keyword id="KW-1185">Reference proteome</keyword>
<keyword id="KW-0770">Synapse</keyword>
<organism>
    <name type="scientific">Macaca fascicularis</name>
    <name type="common">Crab-eating macaque</name>
    <name type="synonym">Cynomolgus monkey</name>
    <dbReference type="NCBI Taxonomy" id="9541"/>
    <lineage>
        <taxon>Eukaryota</taxon>
        <taxon>Metazoa</taxon>
        <taxon>Chordata</taxon>
        <taxon>Craniata</taxon>
        <taxon>Vertebrata</taxon>
        <taxon>Euteleostomi</taxon>
        <taxon>Mammalia</taxon>
        <taxon>Eutheria</taxon>
        <taxon>Euarchontoglires</taxon>
        <taxon>Primates</taxon>
        <taxon>Haplorrhini</taxon>
        <taxon>Catarrhini</taxon>
        <taxon>Cercopithecidae</taxon>
        <taxon>Cercopithecinae</taxon>
        <taxon>Macaca</taxon>
    </lineage>
</organism>
<dbReference type="EMBL" id="AB063093">
    <property type="protein sequence ID" value="BAB60799.1"/>
    <property type="molecule type" value="mRNA"/>
</dbReference>
<dbReference type="EMBL" id="AB169784">
    <property type="protein sequence ID" value="BAE01865.1"/>
    <property type="molecule type" value="mRNA"/>
</dbReference>
<dbReference type="RefSeq" id="NP_001270699.1">
    <property type="nucleotide sequence ID" value="NM_001283770.1"/>
</dbReference>
<dbReference type="RefSeq" id="XP_015300827.1">
    <property type="nucleotide sequence ID" value="XM_015445341.3"/>
</dbReference>
<dbReference type="SMR" id="Q95K78"/>
<dbReference type="STRING" id="9541.ENSMFAP00000003150"/>
<dbReference type="Ensembl" id="ENSMFAT00000026937.2">
    <property type="protein sequence ID" value="ENSMFAP00000003160.1"/>
    <property type="gene ID" value="ENSMFAG00000041003.2"/>
</dbReference>
<dbReference type="GeneID" id="102117213"/>
<dbReference type="KEGG" id="mcf:102117213"/>
<dbReference type="CTD" id="2596"/>
<dbReference type="VEuPathDB" id="HostDB:ENSMFAG00000041003"/>
<dbReference type="eggNOG" id="ENOG502RXWF">
    <property type="taxonomic scope" value="Eukaryota"/>
</dbReference>
<dbReference type="GeneTree" id="ENSGT00730000111265"/>
<dbReference type="OMA" id="TNQAKTP"/>
<dbReference type="OrthoDB" id="18054at314294"/>
<dbReference type="Proteomes" id="UP000233100">
    <property type="component" value="Chromosome 2"/>
</dbReference>
<dbReference type="Bgee" id="ENSMFAG00000041003">
    <property type="expression patterns" value="Expressed in temporal lobe and 5 other cell types or tissues"/>
</dbReference>
<dbReference type="GO" id="GO:0005737">
    <property type="term" value="C:cytoplasm"/>
    <property type="evidence" value="ECO:0007669"/>
    <property type="project" value="UniProtKB-SubCell"/>
</dbReference>
<dbReference type="GO" id="GO:0030425">
    <property type="term" value="C:dendrite"/>
    <property type="evidence" value="ECO:0007669"/>
    <property type="project" value="UniProtKB-SubCell"/>
</dbReference>
<dbReference type="GO" id="GO:0031527">
    <property type="term" value="C:filopodium membrane"/>
    <property type="evidence" value="ECO:0007669"/>
    <property type="project" value="UniProtKB-SubCell"/>
</dbReference>
<dbReference type="GO" id="GO:0032584">
    <property type="term" value="C:growth cone membrane"/>
    <property type="evidence" value="ECO:0007669"/>
    <property type="project" value="UniProtKB-SubCell"/>
</dbReference>
<dbReference type="GO" id="GO:0043204">
    <property type="term" value="C:perikaryon"/>
    <property type="evidence" value="ECO:0007669"/>
    <property type="project" value="UniProtKB-SubCell"/>
</dbReference>
<dbReference type="GO" id="GO:0014069">
    <property type="term" value="C:postsynaptic density"/>
    <property type="evidence" value="ECO:0007669"/>
    <property type="project" value="TreeGrafter"/>
</dbReference>
<dbReference type="GO" id="GO:0005516">
    <property type="term" value="F:calmodulin binding"/>
    <property type="evidence" value="ECO:0007669"/>
    <property type="project" value="UniProtKB-KW"/>
</dbReference>
<dbReference type="GO" id="GO:0035727">
    <property type="term" value="F:lysophosphatidic acid binding"/>
    <property type="evidence" value="ECO:0007669"/>
    <property type="project" value="TreeGrafter"/>
</dbReference>
<dbReference type="GO" id="GO:1901981">
    <property type="term" value="F:phosphatidylinositol phosphate binding"/>
    <property type="evidence" value="ECO:0007669"/>
    <property type="project" value="TreeGrafter"/>
</dbReference>
<dbReference type="GO" id="GO:0001786">
    <property type="term" value="F:phosphatidylserine binding"/>
    <property type="evidence" value="ECO:0007669"/>
    <property type="project" value="TreeGrafter"/>
</dbReference>
<dbReference type="GO" id="GO:0016198">
    <property type="term" value="P:axon choice point recognition"/>
    <property type="evidence" value="ECO:0007669"/>
    <property type="project" value="TreeGrafter"/>
</dbReference>
<dbReference type="GO" id="GO:0031103">
    <property type="term" value="P:axon regeneration"/>
    <property type="evidence" value="ECO:0007669"/>
    <property type="project" value="TreeGrafter"/>
</dbReference>
<dbReference type="GO" id="GO:0040008">
    <property type="term" value="P:regulation of growth"/>
    <property type="evidence" value="ECO:0007669"/>
    <property type="project" value="InterPro"/>
</dbReference>
<dbReference type="GO" id="GO:0042246">
    <property type="term" value="P:tissue regeneration"/>
    <property type="evidence" value="ECO:0007669"/>
    <property type="project" value="TreeGrafter"/>
</dbReference>
<dbReference type="CDD" id="cd23767">
    <property type="entry name" value="IQCD"/>
    <property type="match status" value="1"/>
</dbReference>
<dbReference type="FunFam" id="1.20.5.190:FF:000075">
    <property type="entry name" value="Neuromodulin"/>
    <property type="match status" value="1"/>
</dbReference>
<dbReference type="Gene3D" id="1.20.5.190">
    <property type="match status" value="1"/>
</dbReference>
<dbReference type="InterPro" id="IPR000048">
    <property type="entry name" value="IQ_motif_EF-hand-BS"/>
</dbReference>
<dbReference type="InterPro" id="IPR001422">
    <property type="entry name" value="Neuromodulin"/>
</dbReference>
<dbReference type="InterPro" id="IPR017454">
    <property type="entry name" value="Neuromodulin_C"/>
</dbReference>
<dbReference type="InterPro" id="IPR018947">
    <property type="entry name" value="Neuromodulin_gap-junction_N"/>
</dbReference>
<dbReference type="InterPro" id="IPR033137">
    <property type="entry name" value="Neuromodulin_P_site"/>
</dbReference>
<dbReference type="InterPro" id="IPR018243">
    <property type="entry name" value="Neuromodulin_palmitoyl_site"/>
</dbReference>
<dbReference type="PANTHER" id="PTHR10699">
    <property type="entry name" value="NEUROMODULIN"/>
    <property type="match status" value="1"/>
</dbReference>
<dbReference type="PANTHER" id="PTHR10699:SF15">
    <property type="entry name" value="NEUROMODULIN"/>
    <property type="match status" value="1"/>
</dbReference>
<dbReference type="Pfam" id="PF00612">
    <property type="entry name" value="IQ"/>
    <property type="match status" value="1"/>
</dbReference>
<dbReference type="Pfam" id="PF06614">
    <property type="entry name" value="Neuromodulin"/>
    <property type="match status" value="1"/>
</dbReference>
<dbReference type="Pfam" id="PF10580">
    <property type="entry name" value="Neuromodulin_N"/>
    <property type="match status" value="1"/>
</dbReference>
<dbReference type="PRINTS" id="PR00215">
    <property type="entry name" value="NEUROMODULIN"/>
</dbReference>
<dbReference type="SMART" id="SM00015">
    <property type="entry name" value="IQ"/>
    <property type="match status" value="1"/>
</dbReference>
<dbReference type="PROSITE" id="PS50096">
    <property type="entry name" value="IQ"/>
    <property type="match status" value="1"/>
</dbReference>
<dbReference type="PROSITE" id="PS00412">
    <property type="entry name" value="NEUROMODULIN_1"/>
    <property type="match status" value="1"/>
</dbReference>
<dbReference type="PROSITE" id="PS00413">
    <property type="entry name" value="NEUROMODULIN_2"/>
    <property type="match status" value="1"/>
</dbReference>
<accession>Q95K78</accession>
<proteinExistence type="evidence at transcript level"/>
<reference key="1">
    <citation type="submission" date="2005-06" db="EMBL/GenBank/DDBJ databases">
        <title>DNA sequences of macaque genes expressed in brain or testis and its evolutionary implications.</title>
        <authorList>
            <consortium name="International consortium for macaque cDNA sequencing and analysis"/>
        </authorList>
    </citation>
    <scope>NUCLEOTIDE SEQUENCE [LARGE SCALE MRNA]</scope>
    <source>
        <tissue>Temporal cortex</tissue>
    </source>
</reference>
<evidence type="ECO:0000250" key="1">
    <source>
        <dbReference type="UniProtKB" id="P06836"/>
    </source>
</evidence>
<evidence type="ECO:0000250" key="2">
    <source>
        <dbReference type="UniProtKB" id="P06837"/>
    </source>
</evidence>
<evidence type="ECO:0000250" key="3">
    <source>
        <dbReference type="UniProtKB" id="P07936"/>
    </source>
</evidence>
<evidence type="ECO:0000250" key="4">
    <source>
        <dbReference type="UniProtKB" id="P17677"/>
    </source>
</evidence>
<evidence type="ECO:0000255" key="5">
    <source>
        <dbReference type="PROSITE-ProRule" id="PRU00116"/>
    </source>
</evidence>
<evidence type="ECO:0000256" key="6">
    <source>
        <dbReference type="SAM" id="MobiDB-lite"/>
    </source>
</evidence>
<evidence type="ECO:0000305" key="7"/>
<protein>
    <recommendedName>
        <fullName>Neuromodulin</fullName>
    </recommendedName>
    <alternativeName>
        <fullName>Axonal membrane protein GAP-43</fullName>
    </alternativeName>
    <alternativeName>
        <fullName>Growth-associated protein 43</fullName>
    </alternativeName>
</protein>
<sequence length="238" mass="24789">MLCCMRRTKQVEKNDEDQKIEQDGIKPEDKAHKAATKIQASFRGHITRKKLKGEKKDDAQAAEAEANKKDEAPVADGVEKKGEGTTATEAAPATGSKPDEPGKAGETPSEEKKGEGDAATEQAAPQAPASSEEKAGSAETESATKASTDNSPSSKAEDAPAKEEPKQADVPAAVTAAAATTPAAEDAAAKATAQPPTETGESSQAEENIEAVDETKPKESARQDEGKEEEPEADQEHA</sequence>